<evidence type="ECO:0000255" key="1">
    <source>
        <dbReference type="HAMAP-Rule" id="MF_00693"/>
    </source>
</evidence>
<proteinExistence type="inferred from homology"/>
<dbReference type="EMBL" id="CR378666">
    <property type="protein sequence ID" value="CAG19524.1"/>
    <property type="molecule type" value="Genomic_DNA"/>
</dbReference>
<dbReference type="RefSeq" id="WP_011217857.1">
    <property type="nucleotide sequence ID" value="NC_006370.1"/>
</dbReference>
<dbReference type="SMR" id="Q6LT52"/>
<dbReference type="STRING" id="298386.PBPRA1113"/>
<dbReference type="KEGG" id="ppr:PBPRA1113"/>
<dbReference type="eggNOG" id="COG0217">
    <property type="taxonomic scope" value="Bacteria"/>
</dbReference>
<dbReference type="HOGENOM" id="CLU_062974_2_2_6"/>
<dbReference type="Proteomes" id="UP000000593">
    <property type="component" value="Chromosome 1"/>
</dbReference>
<dbReference type="GO" id="GO:0005829">
    <property type="term" value="C:cytosol"/>
    <property type="evidence" value="ECO:0007669"/>
    <property type="project" value="TreeGrafter"/>
</dbReference>
<dbReference type="GO" id="GO:0003677">
    <property type="term" value="F:DNA binding"/>
    <property type="evidence" value="ECO:0007669"/>
    <property type="project" value="UniProtKB-UniRule"/>
</dbReference>
<dbReference type="GO" id="GO:0006355">
    <property type="term" value="P:regulation of DNA-templated transcription"/>
    <property type="evidence" value="ECO:0007669"/>
    <property type="project" value="UniProtKB-UniRule"/>
</dbReference>
<dbReference type="FunFam" id="1.10.10.200:FF:000001">
    <property type="entry name" value="Probable transcriptional regulatory protein YebC"/>
    <property type="match status" value="1"/>
</dbReference>
<dbReference type="FunFam" id="3.30.70.980:FF:000002">
    <property type="entry name" value="Probable transcriptional regulatory protein YebC"/>
    <property type="match status" value="1"/>
</dbReference>
<dbReference type="Gene3D" id="1.10.10.200">
    <property type="match status" value="1"/>
</dbReference>
<dbReference type="Gene3D" id="3.30.70.980">
    <property type="match status" value="2"/>
</dbReference>
<dbReference type="HAMAP" id="MF_00693">
    <property type="entry name" value="Transcrip_reg_TACO1"/>
    <property type="match status" value="1"/>
</dbReference>
<dbReference type="InterPro" id="IPR017856">
    <property type="entry name" value="Integrase-like_N"/>
</dbReference>
<dbReference type="InterPro" id="IPR048300">
    <property type="entry name" value="TACO1_YebC-like_2nd/3rd_dom"/>
</dbReference>
<dbReference type="InterPro" id="IPR049083">
    <property type="entry name" value="TACO1_YebC_N"/>
</dbReference>
<dbReference type="InterPro" id="IPR002876">
    <property type="entry name" value="Transcrip_reg_TACO1-like"/>
</dbReference>
<dbReference type="InterPro" id="IPR026564">
    <property type="entry name" value="Transcrip_reg_TACO1-like_dom3"/>
</dbReference>
<dbReference type="InterPro" id="IPR029072">
    <property type="entry name" value="YebC-like"/>
</dbReference>
<dbReference type="NCBIfam" id="NF001030">
    <property type="entry name" value="PRK00110.1"/>
    <property type="match status" value="1"/>
</dbReference>
<dbReference type="NCBIfam" id="NF009044">
    <property type="entry name" value="PRK12378.1"/>
    <property type="match status" value="1"/>
</dbReference>
<dbReference type="NCBIfam" id="TIGR01033">
    <property type="entry name" value="YebC/PmpR family DNA-binding transcriptional regulator"/>
    <property type="match status" value="1"/>
</dbReference>
<dbReference type="PANTHER" id="PTHR12532:SF6">
    <property type="entry name" value="TRANSCRIPTIONAL REGULATORY PROTEIN YEBC-RELATED"/>
    <property type="match status" value="1"/>
</dbReference>
<dbReference type="PANTHER" id="PTHR12532">
    <property type="entry name" value="TRANSLATIONAL ACTIVATOR OF CYTOCHROME C OXIDASE 1"/>
    <property type="match status" value="1"/>
</dbReference>
<dbReference type="Pfam" id="PF20772">
    <property type="entry name" value="TACO1_YebC_N"/>
    <property type="match status" value="1"/>
</dbReference>
<dbReference type="Pfam" id="PF01709">
    <property type="entry name" value="Transcrip_reg"/>
    <property type="match status" value="1"/>
</dbReference>
<dbReference type="SUPFAM" id="SSF75625">
    <property type="entry name" value="YebC-like"/>
    <property type="match status" value="1"/>
</dbReference>
<organism>
    <name type="scientific">Photobacterium profundum (strain SS9)</name>
    <dbReference type="NCBI Taxonomy" id="298386"/>
    <lineage>
        <taxon>Bacteria</taxon>
        <taxon>Pseudomonadati</taxon>
        <taxon>Pseudomonadota</taxon>
        <taxon>Gammaproteobacteria</taxon>
        <taxon>Vibrionales</taxon>
        <taxon>Vibrionaceae</taxon>
        <taxon>Photobacterium</taxon>
    </lineage>
</organism>
<comment type="subcellular location">
    <subcellularLocation>
        <location evidence="1">Cytoplasm</location>
    </subcellularLocation>
</comment>
<comment type="similarity">
    <text evidence="1">Belongs to the TACO1 family.</text>
</comment>
<reference key="1">
    <citation type="journal article" date="2005" name="Science">
        <title>Life at depth: Photobacterium profundum genome sequence and expression analysis.</title>
        <authorList>
            <person name="Vezzi A."/>
            <person name="Campanaro S."/>
            <person name="D'Angelo M."/>
            <person name="Simonato F."/>
            <person name="Vitulo N."/>
            <person name="Lauro F.M."/>
            <person name="Cestaro A."/>
            <person name="Malacrida G."/>
            <person name="Simionati B."/>
            <person name="Cannata N."/>
            <person name="Romualdi C."/>
            <person name="Bartlett D.H."/>
            <person name="Valle G."/>
        </authorList>
    </citation>
    <scope>NUCLEOTIDE SEQUENCE [LARGE SCALE GENOMIC DNA]</scope>
    <source>
        <strain>ATCC BAA-1253 / SS9</strain>
    </source>
</reference>
<feature type="chain" id="PRO_0000175863" description="Probable transcriptional regulatory protein PBPRA1113">
    <location>
        <begin position="1"/>
        <end position="247"/>
    </location>
</feature>
<accession>Q6LT52</accession>
<sequence>MAGHSKFANIKHRKAAQDSKRGKIFTKLIREIIVATKDGGPEAENNPRLRAAVDKALSNNMTRDTINRAVKRGAGGDGEADLETVIYEGYGPAGTAVMVECMTDNRNRTVSGVRNAFSKSGGNLGTDGSVNYLFDKKGVISYAAGLDEDVMMEAALESGAEDIETNDDGSIDVYTTPSDFGAVKDALDAAGFDSVNAEVTLVPSTKADLDLETAPKLLRLIDALEDLDDVQEVYHNGEITDEIAEQL</sequence>
<protein>
    <recommendedName>
        <fullName evidence="1">Probable transcriptional regulatory protein PBPRA1113</fullName>
    </recommendedName>
</protein>
<gene>
    <name type="ordered locus">PBPRA1113</name>
</gene>
<keyword id="KW-0963">Cytoplasm</keyword>
<keyword id="KW-0238">DNA-binding</keyword>
<keyword id="KW-1185">Reference proteome</keyword>
<keyword id="KW-0804">Transcription</keyword>
<keyword id="KW-0805">Transcription regulation</keyword>
<name>Y1113_PHOPR</name>